<proteinExistence type="evidence at transcript level"/>
<dbReference type="EMBL" id="AL162508">
    <property type="protein sequence ID" value="CAB82979.1"/>
    <property type="molecule type" value="Genomic_DNA"/>
</dbReference>
<dbReference type="EMBL" id="CP002688">
    <property type="protein sequence ID" value="AED90427.1"/>
    <property type="molecule type" value="Genomic_DNA"/>
</dbReference>
<dbReference type="EMBL" id="BT014938">
    <property type="protein sequence ID" value="AAT47789.1"/>
    <property type="molecule type" value="mRNA"/>
</dbReference>
<dbReference type="EMBL" id="AK175360">
    <property type="protein sequence ID" value="BAD43123.1"/>
    <property type="molecule type" value="mRNA"/>
</dbReference>
<dbReference type="PIR" id="T48227">
    <property type="entry name" value="T48227"/>
</dbReference>
<dbReference type="RefSeq" id="NP_195826.1">
    <property type="nucleotide sequence ID" value="NM_120284.3"/>
</dbReference>
<dbReference type="FunCoup" id="Q9LZM5">
    <property type="interactions" value="4"/>
</dbReference>
<dbReference type="STRING" id="3702.Q9LZM5"/>
<dbReference type="GlyGen" id="Q9LZM5">
    <property type="glycosylation" value="1 site"/>
</dbReference>
<dbReference type="PaxDb" id="3702-AT5G02060.1"/>
<dbReference type="EnsemblPlants" id="AT5G02060.1">
    <property type="protein sequence ID" value="AT5G02060.1"/>
    <property type="gene ID" value="AT5G02060"/>
</dbReference>
<dbReference type="GeneID" id="830773"/>
<dbReference type="Gramene" id="AT5G02060.1">
    <property type="protein sequence ID" value="AT5G02060.1"/>
    <property type="gene ID" value="AT5G02060"/>
</dbReference>
<dbReference type="KEGG" id="ath:AT5G02060"/>
<dbReference type="Araport" id="AT5G02060"/>
<dbReference type="TAIR" id="AT5G02060">
    <property type="gene designation" value="CASPL5B1"/>
</dbReference>
<dbReference type="eggNOG" id="ENOG502RXNM">
    <property type="taxonomic scope" value="Eukaryota"/>
</dbReference>
<dbReference type="HOGENOM" id="CLU_103961_1_0_1"/>
<dbReference type="InParanoid" id="Q9LZM5"/>
<dbReference type="OMA" id="CDRFQIS"/>
<dbReference type="PhylomeDB" id="Q9LZM5"/>
<dbReference type="PRO" id="PR:Q9LZM5"/>
<dbReference type="Proteomes" id="UP000006548">
    <property type="component" value="Chromosome 5"/>
</dbReference>
<dbReference type="ExpressionAtlas" id="Q9LZM5">
    <property type="expression patterns" value="baseline and differential"/>
</dbReference>
<dbReference type="GO" id="GO:0005886">
    <property type="term" value="C:plasma membrane"/>
    <property type="evidence" value="ECO:0007669"/>
    <property type="project" value="UniProtKB-SubCell"/>
</dbReference>
<dbReference type="InterPro" id="IPR006702">
    <property type="entry name" value="CASP_dom"/>
</dbReference>
<dbReference type="InterPro" id="IPR045009">
    <property type="entry name" value="CASPL-5"/>
</dbReference>
<dbReference type="PANTHER" id="PTHR32021:SF48">
    <property type="entry name" value="CASP-LIKE PROTEIN 5B1"/>
    <property type="match status" value="1"/>
</dbReference>
<dbReference type="PANTHER" id="PTHR32021">
    <property type="entry name" value="CASP-LIKE PROTEIN 5B3"/>
    <property type="match status" value="1"/>
</dbReference>
<dbReference type="Pfam" id="PF04535">
    <property type="entry name" value="CASP_dom"/>
    <property type="match status" value="1"/>
</dbReference>
<name>CSPLU_ARATH</name>
<gene>
    <name type="ordered locus">At5g02060</name>
    <name type="ORF">T7H20_110</name>
</gene>
<keyword id="KW-1003">Cell membrane</keyword>
<keyword id="KW-0325">Glycoprotein</keyword>
<keyword id="KW-0472">Membrane</keyword>
<keyword id="KW-1185">Reference proteome</keyword>
<keyword id="KW-0812">Transmembrane</keyword>
<keyword id="KW-1133">Transmembrane helix</keyword>
<protein>
    <recommendedName>
        <fullName>CASP-like protein 5B1</fullName>
        <shortName>AtCASPL5B1</shortName>
    </recommendedName>
</protein>
<comment type="subunit">
    <text evidence="1">Homodimer and heterodimers.</text>
</comment>
<comment type="subcellular location">
    <subcellularLocation>
        <location evidence="1">Cell membrane</location>
        <topology evidence="1">Multi-pass membrane protein</topology>
    </subcellularLocation>
</comment>
<comment type="tissue specificity">
    <text evidence="3">Expressed in leaves, exclusively in hair cells (e.g. differentiated trichomes and immature cells).</text>
</comment>
<comment type="similarity">
    <text evidence="4">Belongs to the Casparian strip membrane proteins (CASP) family.</text>
</comment>
<accession>Q9LZM5</accession>
<feature type="chain" id="PRO_0000308683" description="CASP-like protein 5B1">
    <location>
        <begin position="1"/>
        <end position="152"/>
    </location>
</feature>
<feature type="topological domain" description="Cytoplasmic" evidence="2">
    <location>
        <begin position="1"/>
        <end position="11"/>
    </location>
</feature>
<feature type="transmembrane region" description="Helical" evidence="2">
    <location>
        <begin position="12"/>
        <end position="32"/>
    </location>
</feature>
<feature type="topological domain" description="Extracellular" evidence="2">
    <location>
        <begin position="33"/>
        <end position="42"/>
    </location>
</feature>
<feature type="transmembrane region" description="Helical" evidence="2">
    <location>
        <begin position="43"/>
        <end position="63"/>
    </location>
</feature>
<feature type="topological domain" description="Cytoplasmic" evidence="2">
    <location>
        <begin position="64"/>
        <end position="77"/>
    </location>
</feature>
<feature type="transmembrane region" description="Helical" evidence="2">
    <location>
        <begin position="78"/>
        <end position="98"/>
    </location>
</feature>
<feature type="topological domain" description="Extracellular" evidence="2">
    <location>
        <begin position="99"/>
        <end position="131"/>
    </location>
</feature>
<feature type="transmembrane region" description="Helical" evidence="2">
    <location>
        <begin position="132"/>
        <end position="152"/>
    </location>
</feature>
<feature type="glycosylation site" description="N-linked (GlcNAc...) asparagine" evidence="2">
    <location>
        <position position="39"/>
    </location>
</feature>
<sequence length="152" mass="16535">MKKMIGSPGTMSGLILRLGQCATAAASIGVMVSSYDFSNYTAFCFLVASMGLQLIWSFGLACLDVYAIRRKSDLRSPILLSLFTVGDWVTALLALAAACSSAGVTVLFTKDTEFCRQQPALSCDRFQISVGLSFFNWFLAAISSHTMFWILI</sequence>
<organism>
    <name type="scientific">Arabidopsis thaliana</name>
    <name type="common">Mouse-ear cress</name>
    <dbReference type="NCBI Taxonomy" id="3702"/>
    <lineage>
        <taxon>Eukaryota</taxon>
        <taxon>Viridiplantae</taxon>
        <taxon>Streptophyta</taxon>
        <taxon>Embryophyta</taxon>
        <taxon>Tracheophyta</taxon>
        <taxon>Spermatophyta</taxon>
        <taxon>Magnoliopsida</taxon>
        <taxon>eudicotyledons</taxon>
        <taxon>Gunneridae</taxon>
        <taxon>Pentapetalae</taxon>
        <taxon>rosids</taxon>
        <taxon>malvids</taxon>
        <taxon>Brassicales</taxon>
        <taxon>Brassicaceae</taxon>
        <taxon>Camelineae</taxon>
        <taxon>Arabidopsis</taxon>
    </lineage>
</organism>
<evidence type="ECO:0000250" key="1"/>
<evidence type="ECO:0000255" key="2"/>
<evidence type="ECO:0000269" key="3">
    <source>
    </source>
</evidence>
<evidence type="ECO:0000305" key="4"/>
<reference key="1">
    <citation type="journal article" date="2000" name="Nature">
        <title>Sequence and analysis of chromosome 5 of the plant Arabidopsis thaliana.</title>
        <authorList>
            <person name="Tabata S."/>
            <person name="Kaneko T."/>
            <person name="Nakamura Y."/>
            <person name="Kotani H."/>
            <person name="Kato T."/>
            <person name="Asamizu E."/>
            <person name="Miyajima N."/>
            <person name="Sasamoto S."/>
            <person name="Kimura T."/>
            <person name="Hosouchi T."/>
            <person name="Kawashima K."/>
            <person name="Kohara M."/>
            <person name="Matsumoto M."/>
            <person name="Matsuno A."/>
            <person name="Muraki A."/>
            <person name="Nakayama S."/>
            <person name="Nakazaki N."/>
            <person name="Naruo K."/>
            <person name="Okumura S."/>
            <person name="Shinpo S."/>
            <person name="Takeuchi C."/>
            <person name="Wada T."/>
            <person name="Watanabe A."/>
            <person name="Yamada M."/>
            <person name="Yasuda M."/>
            <person name="Sato S."/>
            <person name="de la Bastide M."/>
            <person name="Huang E."/>
            <person name="Spiegel L."/>
            <person name="Gnoj L."/>
            <person name="O'Shaughnessy A."/>
            <person name="Preston R."/>
            <person name="Habermann K."/>
            <person name="Murray J."/>
            <person name="Johnson D."/>
            <person name="Rohlfing T."/>
            <person name="Nelson J."/>
            <person name="Stoneking T."/>
            <person name="Pepin K."/>
            <person name="Spieth J."/>
            <person name="Sekhon M."/>
            <person name="Armstrong J."/>
            <person name="Becker M."/>
            <person name="Belter E."/>
            <person name="Cordum H."/>
            <person name="Cordes M."/>
            <person name="Courtney L."/>
            <person name="Courtney W."/>
            <person name="Dante M."/>
            <person name="Du H."/>
            <person name="Edwards J."/>
            <person name="Fryman J."/>
            <person name="Haakensen B."/>
            <person name="Lamar E."/>
            <person name="Latreille P."/>
            <person name="Leonard S."/>
            <person name="Meyer R."/>
            <person name="Mulvaney E."/>
            <person name="Ozersky P."/>
            <person name="Riley A."/>
            <person name="Strowmatt C."/>
            <person name="Wagner-McPherson C."/>
            <person name="Wollam A."/>
            <person name="Yoakum M."/>
            <person name="Bell M."/>
            <person name="Dedhia N."/>
            <person name="Parnell L."/>
            <person name="Shah R."/>
            <person name="Rodriguez M."/>
            <person name="Hoon See L."/>
            <person name="Vil D."/>
            <person name="Baker J."/>
            <person name="Kirchoff K."/>
            <person name="Toth K."/>
            <person name="King L."/>
            <person name="Bahret A."/>
            <person name="Miller B."/>
            <person name="Marra M.A."/>
            <person name="Martienssen R."/>
            <person name="McCombie W.R."/>
            <person name="Wilson R.K."/>
            <person name="Murphy G."/>
            <person name="Bancroft I."/>
            <person name="Volckaert G."/>
            <person name="Wambutt R."/>
            <person name="Duesterhoeft A."/>
            <person name="Stiekema W."/>
            <person name="Pohl T."/>
            <person name="Entian K.-D."/>
            <person name="Terryn N."/>
            <person name="Hartley N."/>
            <person name="Bent E."/>
            <person name="Johnson S."/>
            <person name="Langham S.-A."/>
            <person name="McCullagh B."/>
            <person name="Robben J."/>
            <person name="Grymonprez B."/>
            <person name="Zimmermann W."/>
            <person name="Ramsperger U."/>
            <person name="Wedler H."/>
            <person name="Balke K."/>
            <person name="Wedler E."/>
            <person name="Peters S."/>
            <person name="van Staveren M."/>
            <person name="Dirkse W."/>
            <person name="Mooijman P."/>
            <person name="Klein Lankhorst R."/>
            <person name="Weitzenegger T."/>
            <person name="Bothe G."/>
            <person name="Rose M."/>
            <person name="Hauf J."/>
            <person name="Berneiser S."/>
            <person name="Hempel S."/>
            <person name="Feldpausch M."/>
            <person name="Lamberth S."/>
            <person name="Villarroel R."/>
            <person name="Gielen J."/>
            <person name="Ardiles W."/>
            <person name="Bents O."/>
            <person name="Lemcke K."/>
            <person name="Kolesov G."/>
            <person name="Mayer K.F.X."/>
            <person name="Rudd S."/>
            <person name="Schoof H."/>
            <person name="Schueller C."/>
            <person name="Zaccaria P."/>
            <person name="Mewes H.-W."/>
            <person name="Bevan M."/>
            <person name="Fransz P.F."/>
        </authorList>
    </citation>
    <scope>NUCLEOTIDE SEQUENCE [LARGE SCALE GENOMIC DNA]</scope>
    <source>
        <strain>cv. Columbia</strain>
    </source>
</reference>
<reference key="2">
    <citation type="journal article" date="2017" name="Plant J.">
        <title>Araport11: a complete reannotation of the Arabidopsis thaliana reference genome.</title>
        <authorList>
            <person name="Cheng C.Y."/>
            <person name="Krishnakumar V."/>
            <person name="Chan A.P."/>
            <person name="Thibaud-Nissen F."/>
            <person name="Schobel S."/>
            <person name="Town C.D."/>
        </authorList>
    </citation>
    <scope>GENOME REANNOTATION</scope>
    <source>
        <strain>cv. Columbia</strain>
    </source>
</reference>
<reference key="3">
    <citation type="submission" date="2004-06" db="EMBL/GenBank/DDBJ databases">
        <title>Arabidopsis ORF clones.</title>
        <authorList>
            <person name="Cheuk R.F."/>
            <person name="Chen H."/>
            <person name="Kim C.J."/>
            <person name="Shinn P."/>
            <person name="Ecker J.R."/>
        </authorList>
    </citation>
    <scope>NUCLEOTIDE SEQUENCE [LARGE SCALE MRNA]</scope>
    <source>
        <strain>cv. Columbia</strain>
    </source>
</reference>
<reference key="4">
    <citation type="submission" date="2004-09" db="EMBL/GenBank/DDBJ databases">
        <title>Large-scale analysis of RIKEN Arabidopsis full-length (RAFL) cDNAs.</title>
        <authorList>
            <person name="Totoki Y."/>
            <person name="Seki M."/>
            <person name="Ishida J."/>
            <person name="Nakajima M."/>
            <person name="Enju A."/>
            <person name="Kamiya A."/>
            <person name="Narusaka M."/>
            <person name="Shin-i T."/>
            <person name="Nakagawa M."/>
            <person name="Sakamoto N."/>
            <person name="Oishi K."/>
            <person name="Kohara Y."/>
            <person name="Kobayashi M."/>
            <person name="Toyoda A."/>
            <person name="Sakaki Y."/>
            <person name="Sakurai T."/>
            <person name="Iida K."/>
            <person name="Akiyama K."/>
            <person name="Satou M."/>
            <person name="Toyoda T."/>
            <person name="Konagaya A."/>
            <person name="Carninci P."/>
            <person name="Kawai J."/>
            <person name="Hayashizaki Y."/>
            <person name="Shinozaki K."/>
        </authorList>
    </citation>
    <scope>NUCLEOTIDE SEQUENCE [LARGE SCALE MRNA]</scope>
    <source>
        <strain>cv. Columbia</strain>
    </source>
</reference>
<reference key="5">
    <citation type="journal article" date="2014" name="Plant Physiol.">
        <title>Functional and evolutionary analysis of the CASPARIAN STRIP MEMBRANE DOMAIN PROTEIN family.</title>
        <authorList>
            <person name="Roppolo D."/>
            <person name="Boeckmann B."/>
            <person name="Pfister A."/>
            <person name="Boutet E."/>
            <person name="Rubio M.C."/>
            <person name="Denervaud-Tendon V."/>
            <person name="Vermeer J.E."/>
            <person name="Gheyselinck J."/>
            <person name="Xenarios I."/>
            <person name="Geldner N."/>
        </authorList>
    </citation>
    <scope>TISSUE SPECIFICITY</scope>
    <scope>GENE FAMILY</scope>
    <scope>NOMENCLATURE</scope>
</reference>